<accession>O31716</accession>
<accession>Q7BVR5</accession>
<protein>
    <recommendedName>
        <fullName>Uncharacterized ABC transporter ATP-binding protein YkpA</fullName>
    </recommendedName>
</protein>
<evidence type="ECO:0000255" key="1">
    <source>
        <dbReference type="PROSITE-ProRule" id="PRU00434"/>
    </source>
</evidence>
<evidence type="ECO:0000305" key="2"/>
<name>YKPA_BACSU</name>
<organism>
    <name type="scientific">Bacillus subtilis (strain 168)</name>
    <dbReference type="NCBI Taxonomy" id="224308"/>
    <lineage>
        <taxon>Bacteria</taxon>
        <taxon>Bacillati</taxon>
        <taxon>Bacillota</taxon>
        <taxon>Bacilli</taxon>
        <taxon>Bacillales</taxon>
        <taxon>Bacillaceae</taxon>
        <taxon>Bacillus</taxon>
    </lineage>
</organism>
<comment type="similarity">
    <text evidence="2">Belongs to the ABC transporter superfamily.</text>
</comment>
<keyword id="KW-0067">ATP-binding</keyword>
<keyword id="KW-0547">Nucleotide-binding</keyword>
<keyword id="KW-1185">Reference proteome</keyword>
<keyword id="KW-0677">Repeat</keyword>
<keyword id="KW-0813">Transport</keyword>
<gene>
    <name type="primary">ykpA</name>
    <name type="ordered locus">BSU14430</name>
</gene>
<feature type="chain" id="PRO_0000360504" description="Uncharacterized ABC transporter ATP-binding protein YkpA">
    <location>
        <begin position="1"/>
        <end position="540"/>
    </location>
</feature>
<feature type="domain" description="ABC transporter 1" evidence="1">
    <location>
        <begin position="2"/>
        <end position="252"/>
    </location>
</feature>
<feature type="domain" description="ABC transporter 2" evidence="1">
    <location>
        <begin position="320"/>
        <end position="537"/>
    </location>
</feature>
<feature type="binding site" evidence="1">
    <location>
        <begin position="34"/>
        <end position="41"/>
    </location>
    <ligand>
        <name>ATP</name>
        <dbReference type="ChEBI" id="CHEBI:30616"/>
    </ligand>
</feature>
<reference key="1">
    <citation type="submission" date="1997-07" db="EMBL/GenBank/DDBJ databases">
        <title>Sequence analysis of the mobA-ampS region of the Bacillus subtilis chromosome.</title>
        <authorList>
            <person name="Caldwell R.M."/>
            <person name="Ferrari E."/>
        </authorList>
    </citation>
    <scope>NUCLEOTIDE SEQUENCE [GENOMIC DNA]</scope>
    <source>
        <strain>168</strain>
    </source>
</reference>
<reference key="2">
    <citation type="journal article" date="1997" name="Nature">
        <title>The complete genome sequence of the Gram-positive bacterium Bacillus subtilis.</title>
        <authorList>
            <person name="Kunst F."/>
            <person name="Ogasawara N."/>
            <person name="Moszer I."/>
            <person name="Albertini A.M."/>
            <person name="Alloni G."/>
            <person name="Azevedo V."/>
            <person name="Bertero M.G."/>
            <person name="Bessieres P."/>
            <person name="Bolotin A."/>
            <person name="Borchert S."/>
            <person name="Borriss R."/>
            <person name="Boursier L."/>
            <person name="Brans A."/>
            <person name="Braun M."/>
            <person name="Brignell S.C."/>
            <person name="Bron S."/>
            <person name="Brouillet S."/>
            <person name="Bruschi C.V."/>
            <person name="Caldwell B."/>
            <person name="Capuano V."/>
            <person name="Carter N.M."/>
            <person name="Choi S.-K."/>
            <person name="Codani J.-J."/>
            <person name="Connerton I.F."/>
            <person name="Cummings N.J."/>
            <person name="Daniel R.A."/>
            <person name="Denizot F."/>
            <person name="Devine K.M."/>
            <person name="Duesterhoeft A."/>
            <person name="Ehrlich S.D."/>
            <person name="Emmerson P.T."/>
            <person name="Entian K.-D."/>
            <person name="Errington J."/>
            <person name="Fabret C."/>
            <person name="Ferrari E."/>
            <person name="Foulger D."/>
            <person name="Fritz C."/>
            <person name="Fujita M."/>
            <person name="Fujita Y."/>
            <person name="Fuma S."/>
            <person name="Galizzi A."/>
            <person name="Galleron N."/>
            <person name="Ghim S.-Y."/>
            <person name="Glaser P."/>
            <person name="Goffeau A."/>
            <person name="Golightly E.J."/>
            <person name="Grandi G."/>
            <person name="Guiseppi G."/>
            <person name="Guy B.J."/>
            <person name="Haga K."/>
            <person name="Haiech J."/>
            <person name="Harwood C.R."/>
            <person name="Henaut A."/>
            <person name="Hilbert H."/>
            <person name="Holsappel S."/>
            <person name="Hosono S."/>
            <person name="Hullo M.-F."/>
            <person name="Itaya M."/>
            <person name="Jones L.-M."/>
            <person name="Joris B."/>
            <person name="Karamata D."/>
            <person name="Kasahara Y."/>
            <person name="Klaerr-Blanchard M."/>
            <person name="Klein C."/>
            <person name="Kobayashi Y."/>
            <person name="Koetter P."/>
            <person name="Koningstein G."/>
            <person name="Krogh S."/>
            <person name="Kumano M."/>
            <person name="Kurita K."/>
            <person name="Lapidus A."/>
            <person name="Lardinois S."/>
            <person name="Lauber J."/>
            <person name="Lazarevic V."/>
            <person name="Lee S.-M."/>
            <person name="Levine A."/>
            <person name="Liu H."/>
            <person name="Masuda S."/>
            <person name="Mauel C."/>
            <person name="Medigue C."/>
            <person name="Medina N."/>
            <person name="Mellado R.P."/>
            <person name="Mizuno M."/>
            <person name="Moestl D."/>
            <person name="Nakai S."/>
            <person name="Noback M."/>
            <person name="Noone D."/>
            <person name="O'Reilly M."/>
            <person name="Ogawa K."/>
            <person name="Ogiwara A."/>
            <person name="Oudega B."/>
            <person name="Park S.-H."/>
            <person name="Parro V."/>
            <person name="Pohl T.M."/>
            <person name="Portetelle D."/>
            <person name="Porwollik S."/>
            <person name="Prescott A.M."/>
            <person name="Presecan E."/>
            <person name="Pujic P."/>
            <person name="Purnelle B."/>
            <person name="Rapoport G."/>
            <person name="Rey M."/>
            <person name="Reynolds S."/>
            <person name="Rieger M."/>
            <person name="Rivolta C."/>
            <person name="Rocha E."/>
            <person name="Roche B."/>
            <person name="Rose M."/>
            <person name="Sadaie Y."/>
            <person name="Sato T."/>
            <person name="Scanlan E."/>
            <person name="Schleich S."/>
            <person name="Schroeter R."/>
            <person name="Scoffone F."/>
            <person name="Sekiguchi J."/>
            <person name="Sekowska A."/>
            <person name="Seror S.J."/>
            <person name="Serror P."/>
            <person name="Shin B.-S."/>
            <person name="Soldo B."/>
            <person name="Sorokin A."/>
            <person name="Tacconi E."/>
            <person name="Takagi T."/>
            <person name="Takahashi H."/>
            <person name="Takemaru K."/>
            <person name="Takeuchi M."/>
            <person name="Tamakoshi A."/>
            <person name="Tanaka T."/>
            <person name="Terpstra P."/>
            <person name="Tognoni A."/>
            <person name="Tosato V."/>
            <person name="Uchiyama S."/>
            <person name="Vandenbol M."/>
            <person name="Vannier F."/>
            <person name="Vassarotti A."/>
            <person name="Viari A."/>
            <person name="Wambutt R."/>
            <person name="Wedler E."/>
            <person name="Wedler H."/>
            <person name="Weitzenegger T."/>
            <person name="Winters P."/>
            <person name="Wipat A."/>
            <person name="Yamamoto H."/>
            <person name="Yamane K."/>
            <person name="Yasumoto K."/>
            <person name="Yata K."/>
            <person name="Yoshida K."/>
            <person name="Yoshikawa H.-F."/>
            <person name="Zumstein E."/>
            <person name="Yoshikawa H."/>
            <person name="Danchin A."/>
        </authorList>
    </citation>
    <scope>NUCLEOTIDE SEQUENCE [LARGE SCALE GENOMIC DNA]</scope>
    <source>
        <strain>168</strain>
    </source>
</reference>
<sequence>MIAVNNVSLRFADRKLFEDVNIKFTPGNCYGLIGANGAGKSTFLKVLSGEIEPQTGDVHMSPGERLAVLKQNHFEYEEYEVLKVVIMGHKRLYEVMQEKDAIYMKPDFSDEDGIRAAELEGEFAELNGWEAESEAAILLKGLGISEDLHTKKMADLGGSEKVKVLLAQALFGKPDVLLLDEPTNHLDLQAIQWLEEFLINFENTVIVVSHDRHFLNKVCTHIADLDFNKIQIYVGNYDFWYESSQLALKLSQEANKKKEEQIKQLQEFVARFSANASKSKQATSRKKLLEKITLDDIKPSSRRYPYVNFTPEREIGNDVLRVEGLTKTIDGVKVLDNVSFIMNREDKIAFTGRNELAVTTLFKIISGEMEADSGTFKWGVTTSQAYFPKDNSEYFEGSDLNLVDWLRQYSPHDQSESFLRGFLGRMLFSGEEVHKKANVLSGGEKVRCMLSKAMLSGANILILDEPTNHLDLESITALNNGLISFKGAMLFTSHDHQFVQTIANRIIEITPNGIVDKQMSYDEFLENADVQKKLTELYAE</sequence>
<dbReference type="EMBL" id="AF012285">
    <property type="protein sequence ID" value="AAC24918.1"/>
    <property type="molecule type" value="Genomic_DNA"/>
</dbReference>
<dbReference type="EMBL" id="AL009126">
    <property type="protein sequence ID" value="CAB13316.1"/>
    <property type="molecule type" value="Genomic_DNA"/>
</dbReference>
<dbReference type="PIR" id="E69861">
    <property type="entry name" value="E69861"/>
</dbReference>
<dbReference type="RefSeq" id="NP_389326.1">
    <property type="nucleotide sequence ID" value="NC_000964.3"/>
</dbReference>
<dbReference type="RefSeq" id="WP_003232344.1">
    <property type="nucleotide sequence ID" value="NZ_OZ025638.1"/>
</dbReference>
<dbReference type="SMR" id="O31716"/>
<dbReference type="FunCoup" id="O31716">
    <property type="interactions" value="50"/>
</dbReference>
<dbReference type="IntAct" id="O31716">
    <property type="interactions" value="1"/>
</dbReference>
<dbReference type="MINT" id="O31716"/>
<dbReference type="STRING" id="224308.BSU14430"/>
<dbReference type="jPOST" id="O31716"/>
<dbReference type="PaxDb" id="224308-BSU14430"/>
<dbReference type="EnsemblBacteria" id="CAB13316">
    <property type="protein sequence ID" value="CAB13316"/>
    <property type="gene ID" value="BSU_14430"/>
</dbReference>
<dbReference type="GeneID" id="936066"/>
<dbReference type="KEGG" id="bsu:BSU14430"/>
<dbReference type="PATRIC" id="fig|224308.179.peg.1573"/>
<dbReference type="eggNOG" id="COG0488">
    <property type="taxonomic scope" value="Bacteria"/>
</dbReference>
<dbReference type="InParanoid" id="O31716"/>
<dbReference type="OrthoDB" id="9760950at2"/>
<dbReference type="PhylomeDB" id="O31716"/>
<dbReference type="BioCyc" id="BSUB:BSU14430-MONOMER"/>
<dbReference type="Proteomes" id="UP000001570">
    <property type="component" value="Chromosome"/>
</dbReference>
<dbReference type="GO" id="GO:0005524">
    <property type="term" value="F:ATP binding"/>
    <property type="evidence" value="ECO:0000318"/>
    <property type="project" value="GO_Central"/>
</dbReference>
<dbReference type="GO" id="GO:0016887">
    <property type="term" value="F:ATP hydrolysis activity"/>
    <property type="evidence" value="ECO:0007669"/>
    <property type="project" value="InterPro"/>
</dbReference>
<dbReference type="CDD" id="cd03221">
    <property type="entry name" value="ABCF_EF-3"/>
    <property type="match status" value="2"/>
</dbReference>
<dbReference type="FunFam" id="3.40.50.300:FF:000011">
    <property type="entry name" value="Putative ABC transporter ATP-binding component"/>
    <property type="match status" value="1"/>
</dbReference>
<dbReference type="FunFam" id="3.40.50.300:FF:000070">
    <property type="entry name" value="Putative ABC transporter ATP-binding component"/>
    <property type="match status" value="1"/>
</dbReference>
<dbReference type="Gene3D" id="3.40.50.300">
    <property type="entry name" value="P-loop containing nucleotide triphosphate hydrolases"/>
    <property type="match status" value="2"/>
</dbReference>
<dbReference type="InterPro" id="IPR003593">
    <property type="entry name" value="AAA+_ATPase"/>
</dbReference>
<dbReference type="InterPro" id="IPR032781">
    <property type="entry name" value="ABC_tran_Xtn"/>
</dbReference>
<dbReference type="InterPro" id="IPR003439">
    <property type="entry name" value="ABC_transporter-like_ATP-bd"/>
</dbReference>
<dbReference type="InterPro" id="IPR051309">
    <property type="entry name" value="ABCF_ATPase"/>
</dbReference>
<dbReference type="InterPro" id="IPR027417">
    <property type="entry name" value="P-loop_NTPase"/>
</dbReference>
<dbReference type="PANTHER" id="PTHR42855">
    <property type="entry name" value="ABC TRANSPORTER ATP-BINDING SUBUNIT"/>
    <property type="match status" value="1"/>
</dbReference>
<dbReference type="PANTHER" id="PTHR42855:SF2">
    <property type="entry name" value="DRUG RESISTANCE ABC TRANSPORTER,ATP-BINDING PROTEIN"/>
    <property type="match status" value="1"/>
</dbReference>
<dbReference type="Pfam" id="PF00005">
    <property type="entry name" value="ABC_tran"/>
    <property type="match status" value="2"/>
</dbReference>
<dbReference type="Pfam" id="PF12848">
    <property type="entry name" value="ABC_tran_Xtn"/>
    <property type="match status" value="1"/>
</dbReference>
<dbReference type="SMART" id="SM00382">
    <property type="entry name" value="AAA"/>
    <property type="match status" value="2"/>
</dbReference>
<dbReference type="SUPFAM" id="SSF52540">
    <property type="entry name" value="P-loop containing nucleoside triphosphate hydrolases"/>
    <property type="match status" value="2"/>
</dbReference>
<dbReference type="PROSITE" id="PS50893">
    <property type="entry name" value="ABC_TRANSPORTER_2"/>
    <property type="match status" value="2"/>
</dbReference>
<proteinExistence type="inferred from homology"/>